<accession>Q9EQ15</accession>
<accession>Q8R1F3</accession>
<accession>Q9CWP2</accession>
<accession>Q9D3Y1</accession>
<keyword id="KW-0025">Alternative splicing</keyword>
<keyword id="KW-0963">Cytoplasm</keyword>
<keyword id="KW-0227">DNA damage</keyword>
<keyword id="KW-0539">Nucleus</keyword>
<keyword id="KW-1185">Reference proteome</keyword>
<keyword id="KW-0677">Repeat</keyword>
<keyword id="KW-0853">WD repeat</keyword>
<gene>
    <name type="primary">Gnb1l</name>
    <name type="synonym">Estm55</name>
    <name type="synonym">Wdr14</name>
</gene>
<feature type="chain" id="PRO_0000051009" description="Guanine nucleotide-binding protein subunit beta-like protein 1">
    <location>
        <begin position="1"/>
        <end position="326"/>
    </location>
</feature>
<feature type="repeat" description="WD 1">
    <location>
        <begin position="17"/>
        <end position="61"/>
    </location>
</feature>
<feature type="repeat" description="WD 2">
    <location>
        <begin position="64"/>
        <end position="104"/>
    </location>
</feature>
<feature type="repeat" description="WD 3">
    <location>
        <begin position="159"/>
        <end position="202"/>
    </location>
</feature>
<feature type="repeat" description="WD 4">
    <location>
        <begin position="205"/>
        <end position="244"/>
    </location>
</feature>
<feature type="repeat" description="WD 5">
    <location>
        <begin position="250"/>
        <end position="291"/>
    </location>
</feature>
<feature type="repeat" description="WD 6">
    <location>
        <begin position="292"/>
        <end position="325"/>
    </location>
</feature>
<feature type="splice variant" id="VSP_006769" description="In isoform 2." evidence="4">
    <original>TNSSLRPLLLAGYEDGSVTLWDISERK</original>
    <variation>ESQKPQCPCLNWYRRGGGKVITGYCLF</variation>
    <location>
        <begin position="172"/>
        <end position="198"/>
    </location>
</feature>
<feature type="splice variant" id="VSP_006770" description="In isoform 2." evidence="4">
    <location>
        <begin position="199"/>
        <end position="326"/>
    </location>
</feature>
<feature type="sequence conflict" description="In Ref. 2; BAB26980." evidence="5" ref="2">
    <original>A</original>
    <variation>S</variation>
    <location>
        <position position="2"/>
    </location>
</feature>
<feature type="sequence conflict" description="In Ref. 2; BAB26980." evidence="5" ref="2">
    <original>A</original>
    <variation>T</variation>
    <location>
        <position position="33"/>
    </location>
</feature>
<feature type="sequence conflict" description="In Ref. 2; BAB26980." evidence="5" ref="2">
    <original>V</original>
    <variation>I</variation>
    <location>
        <position position="59"/>
    </location>
</feature>
<feature type="sequence conflict" description="In Ref. 2; BAB26980." evidence="5" ref="2">
    <original>G</original>
    <variation>W</variation>
    <location>
        <position position="66"/>
    </location>
</feature>
<feature type="sequence conflict" description="In Ref. 2; BAB26980." evidence="5" ref="2">
    <original>H</original>
    <variation>Q</variation>
    <location>
        <position position="80"/>
    </location>
</feature>
<feature type="sequence conflict" description="In Ref. 2; BAB26980." evidence="5" ref="2">
    <original>S</original>
    <variation>T</variation>
    <location>
        <position position="84"/>
    </location>
</feature>
<feature type="sequence conflict" description="In Ref. 2; BAB26980." evidence="5" ref="2">
    <original>D</original>
    <variation>Q</variation>
    <location>
        <position position="95"/>
    </location>
</feature>
<feature type="sequence conflict" description="In Ref. 2; BAB26980." evidence="5" ref="2">
    <original>GKG</original>
    <variation>RKS</variation>
    <location>
        <begin position="133"/>
        <end position="135"/>
    </location>
</feature>
<feature type="sequence conflict" description="In Ref. 2; BAB26980." evidence="5" ref="2">
    <original>V</original>
    <variation>F</variation>
    <location>
        <position position="139"/>
    </location>
</feature>
<feature type="sequence conflict" description="In Ref. 2; BAB26980." evidence="5" ref="2">
    <original>V</original>
    <variation>E</variation>
    <location>
        <position position="150"/>
    </location>
</feature>
<feature type="sequence conflict" description="In Ref. 1; AAG44996." evidence="5" ref="1">
    <original>L</original>
    <variation>Q</variation>
    <location>
        <position position="236"/>
    </location>
</feature>
<organism>
    <name type="scientific">Mus musculus</name>
    <name type="common">Mouse</name>
    <dbReference type="NCBI Taxonomy" id="10090"/>
    <lineage>
        <taxon>Eukaryota</taxon>
        <taxon>Metazoa</taxon>
        <taxon>Chordata</taxon>
        <taxon>Craniata</taxon>
        <taxon>Vertebrata</taxon>
        <taxon>Euteleostomi</taxon>
        <taxon>Mammalia</taxon>
        <taxon>Eutheria</taxon>
        <taxon>Euarchontoglires</taxon>
        <taxon>Glires</taxon>
        <taxon>Rodentia</taxon>
        <taxon>Myomorpha</taxon>
        <taxon>Muroidea</taxon>
        <taxon>Muridae</taxon>
        <taxon>Murinae</taxon>
        <taxon>Mus</taxon>
        <taxon>Mus</taxon>
    </lineage>
</organism>
<sequence>MAALFPPPPGPRFVLRGTQSAVNTLHFCPPSQAAGNPLLFSGSQNGLVHIWSLQTRRIVTTLNGHGGQGVIWLKTLPQGHQLLSQGRDLRLCLWDLEEGRNTIMDSVQLDSVGFCRGSILVRGQQCWMLAVPGKGSDEVQILEMPSKTSVCTLKPEADARPGMPMCLGLWQTNSSLRPLLLAGYEDGSVTLWDISERKVCSQITCHEEPVMGLDFDSQKAKGISGSAGKVLAVWSLDDQQSLQVKKTHELTNPGIAEVTIRPDHKILATAGWDHRIRVFHWRTMKPLAVLAFHSAPVYCVAFAADGLLAAGSKDQRISIWSLYPCP</sequence>
<reference key="1">
    <citation type="journal article" date="2001" name="Genomics">
        <title>Isolation and characterization of a novel gene containing WD40 repeats from the region deleted in velo-cardio-facial/DiGeorge syndrome on chromosome 22q11.</title>
        <authorList>
            <person name="Funke B."/>
            <person name="Pandita R.K."/>
            <person name="Morrow B.E."/>
        </authorList>
    </citation>
    <scope>NUCLEOTIDE SEQUENCE [MRNA] (ISOFORM 1)</scope>
</reference>
<reference key="2">
    <citation type="journal article" date="2005" name="Science">
        <title>The transcriptional landscape of the mammalian genome.</title>
        <authorList>
            <person name="Carninci P."/>
            <person name="Kasukawa T."/>
            <person name="Katayama S."/>
            <person name="Gough J."/>
            <person name="Frith M.C."/>
            <person name="Maeda N."/>
            <person name="Oyama R."/>
            <person name="Ravasi T."/>
            <person name="Lenhard B."/>
            <person name="Wells C."/>
            <person name="Kodzius R."/>
            <person name="Shimokawa K."/>
            <person name="Bajic V.B."/>
            <person name="Brenner S.E."/>
            <person name="Batalov S."/>
            <person name="Forrest A.R."/>
            <person name="Zavolan M."/>
            <person name="Davis M.J."/>
            <person name="Wilming L.G."/>
            <person name="Aidinis V."/>
            <person name="Allen J.E."/>
            <person name="Ambesi-Impiombato A."/>
            <person name="Apweiler R."/>
            <person name="Aturaliya R.N."/>
            <person name="Bailey T.L."/>
            <person name="Bansal M."/>
            <person name="Baxter L."/>
            <person name="Beisel K.W."/>
            <person name="Bersano T."/>
            <person name="Bono H."/>
            <person name="Chalk A.M."/>
            <person name="Chiu K.P."/>
            <person name="Choudhary V."/>
            <person name="Christoffels A."/>
            <person name="Clutterbuck D.R."/>
            <person name="Crowe M.L."/>
            <person name="Dalla E."/>
            <person name="Dalrymple B.P."/>
            <person name="de Bono B."/>
            <person name="Della Gatta G."/>
            <person name="di Bernardo D."/>
            <person name="Down T."/>
            <person name="Engstrom P."/>
            <person name="Fagiolini M."/>
            <person name="Faulkner G."/>
            <person name="Fletcher C.F."/>
            <person name="Fukushima T."/>
            <person name="Furuno M."/>
            <person name="Futaki S."/>
            <person name="Gariboldi M."/>
            <person name="Georgii-Hemming P."/>
            <person name="Gingeras T.R."/>
            <person name="Gojobori T."/>
            <person name="Green R.E."/>
            <person name="Gustincich S."/>
            <person name="Harbers M."/>
            <person name="Hayashi Y."/>
            <person name="Hensch T.K."/>
            <person name="Hirokawa N."/>
            <person name="Hill D."/>
            <person name="Huminiecki L."/>
            <person name="Iacono M."/>
            <person name="Ikeo K."/>
            <person name="Iwama A."/>
            <person name="Ishikawa T."/>
            <person name="Jakt M."/>
            <person name="Kanapin A."/>
            <person name="Katoh M."/>
            <person name="Kawasawa Y."/>
            <person name="Kelso J."/>
            <person name="Kitamura H."/>
            <person name="Kitano H."/>
            <person name="Kollias G."/>
            <person name="Krishnan S.P."/>
            <person name="Kruger A."/>
            <person name="Kummerfeld S.K."/>
            <person name="Kurochkin I.V."/>
            <person name="Lareau L.F."/>
            <person name="Lazarevic D."/>
            <person name="Lipovich L."/>
            <person name="Liu J."/>
            <person name="Liuni S."/>
            <person name="McWilliam S."/>
            <person name="Madan Babu M."/>
            <person name="Madera M."/>
            <person name="Marchionni L."/>
            <person name="Matsuda H."/>
            <person name="Matsuzawa S."/>
            <person name="Miki H."/>
            <person name="Mignone F."/>
            <person name="Miyake S."/>
            <person name="Morris K."/>
            <person name="Mottagui-Tabar S."/>
            <person name="Mulder N."/>
            <person name="Nakano N."/>
            <person name="Nakauchi H."/>
            <person name="Ng P."/>
            <person name="Nilsson R."/>
            <person name="Nishiguchi S."/>
            <person name="Nishikawa S."/>
            <person name="Nori F."/>
            <person name="Ohara O."/>
            <person name="Okazaki Y."/>
            <person name="Orlando V."/>
            <person name="Pang K.C."/>
            <person name="Pavan W.J."/>
            <person name="Pavesi G."/>
            <person name="Pesole G."/>
            <person name="Petrovsky N."/>
            <person name="Piazza S."/>
            <person name="Reed J."/>
            <person name="Reid J.F."/>
            <person name="Ring B.Z."/>
            <person name="Ringwald M."/>
            <person name="Rost B."/>
            <person name="Ruan Y."/>
            <person name="Salzberg S.L."/>
            <person name="Sandelin A."/>
            <person name="Schneider C."/>
            <person name="Schoenbach C."/>
            <person name="Sekiguchi K."/>
            <person name="Semple C.A."/>
            <person name="Seno S."/>
            <person name="Sessa L."/>
            <person name="Sheng Y."/>
            <person name="Shibata Y."/>
            <person name="Shimada H."/>
            <person name="Shimada K."/>
            <person name="Silva D."/>
            <person name="Sinclair B."/>
            <person name="Sperling S."/>
            <person name="Stupka E."/>
            <person name="Sugiura K."/>
            <person name="Sultana R."/>
            <person name="Takenaka Y."/>
            <person name="Taki K."/>
            <person name="Tammoja K."/>
            <person name="Tan S.L."/>
            <person name="Tang S."/>
            <person name="Taylor M.S."/>
            <person name="Tegner J."/>
            <person name="Teichmann S.A."/>
            <person name="Ueda H.R."/>
            <person name="van Nimwegen E."/>
            <person name="Verardo R."/>
            <person name="Wei C.L."/>
            <person name="Yagi K."/>
            <person name="Yamanishi H."/>
            <person name="Zabarovsky E."/>
            <person name="Zhu S."/>
            <person name="Zimmer A."/>
            <person name="Hide W."/>
            <person name="Bult C."/>
            <person name="Grimmond S.M."/>
            <person name="Teasdale R.D."/>
            <person name="Liu E.T."/>
            <person name="Brusic V."/>
            <person name="Quackenbush J."/>
            <person name="Wahlestedt C."/>
            <person name="Mattick J.S."/>
            <person name="Hume D.A."/>
            <person name="Kai C."/>
            <person name="Sasaki D."/>
            <person name="Tomaru Y."/>
            <person name="Fukuda S."/>
            <person name="Kanamori-Katayama M."/>
            <person name="Suzuki M."/>
            <person name="Aoki J."/>
            <person name="Arakawa T."/>
            <person name="Iida J."/>
            <person name="Imamura K."/>
            <person name="Itoh M."/>
            <person name="Kato T."/>
            <person name="Kawaji H."/>
            <person name="Kawagashira N."/>
            <person name="Kawashima T."/>
            <person name="Kojima M."/>
            <person name="Kondo S."/>
            <person name="Konno H."/>
            <person name="Nakano K."/>
            <person name="Ninomiya N."/>
            <person name="Nishio T."/>
            <person name="Okada M."/>
            <person name="Plessy C."/>
            <person name="Shibata K."/>
            <person name="Shiraki T."/>
            <person name="Suzuki S."/>
            <person name="Tagami M."/>
            <person name="Waki K."/>
            <person name="Watahiki A."/>
            <person name="Okamura-Oho Y."/>
            <person name="Suzuki H."/>
            <person name="Kawai J."/>
            <person name="Hayashizaki Y."/>
        </authorList>
    </citation>
    <scope>NUCLEOTIDE SEQUENCE [LARGE SCALE MRNA] (ISOFORM 1)</scope>
    <source>
        <strain>C57BL/6J</strain>
        <tissue>Embryonic stem cell</tissue>
        <tissue>Testis</tissue>
    </source>
</reference>
<reference key="3">
    <citation type="journal article" date="2004" name="Genome Res.">
        <title>The status, quality, and expansion of the NIH full-length cDNA project: the Mammalian Gene Collection (MGC).</title>
        <authorList>
            <consortium name="The MGC Project Team"/>
        </authorList>
    </citation>
    <scope>NUCLEOTIDE SEQUENCE [LARGE SCALE MRNA] (ISOFORMS 1 AND 2)</scope>
    <source>
        <strain>Czech II</strain>
        <tissue>Mammary tumor</tissue>
        <tissue>Salivary gland</tissue>
    </source>
</reference>
<reference key="4">
    <citation type="journal article" date="2006" name="Proc. Natl. Acad. Sci. U.S.A.">
        <title>Tbx1 haploinsufficiency is linked to behavioral disorders in mice and humans: implications for 22q11 deletion syndrome.</title>
        <authorList>
            <person name="Paylor R."/>
            <person name="Glaser B."/>
            <person name="Mupo A."/>
            <person name="Ataliotis P."/>
            <person name="Spencer C."/>
            <person name="Sobotka A."/>
            <person name="Sparks C."/>
            <person name="Choi C.H."/>
            <person name="Oghalai J."/>
            <person name="Curran S."/>
            <person name="Murphy K.C."/>
            <person name="Monks S."/>
            <person name="Williams N."/>
            <person name="O'Donovan M.C."/>
            <person name="Owen M.J."/>
            <person name="Scambler P.J."/>
            <person name="Lindsay E."/>
        </authorList>
    </citation>
    <scope>DEVELOPMENTAL STAGE</scope>
    <scope>TISSUE SPECIFICITY</scope>
    <scope>DISRUPTION PHENOTYPE</scope>
</reference>
<reference key="5">
    <citation type="journal article" date="2008" name="Mol. Cell. Neurosci.">
        <title>Mitochondrial localization and function of a subset of 22q11 deletion syndrome candidate genes.</title>
        <authorList>
            <person name="Maynard T.M."/>
            <person name="Meechan D.W."/>
            <person name="Dudevoir M.L."/>
            <person name="Gopalakrishna D."/>
            <person name="Peters A.Z."/>
            <person name="Heindel C.C."/>
            <person name="Sugimoto T.J."/>
            <person name="Wu Y."/>
            <person name="Lieberman J.A."/>
            <person name="Lamantia A.S."/>
        </authorList>
    </citation>
    <scope>SUBCELLULAR LOCATION</scope>
</reference>
<evidence type="ECO:0000250" key="1">
    <source>
        <dbReference type="UniProtKB" id="Q9BYB4"/>
    </source>
</evidence>
<evidence type="ECO:0000269" key="2">
    <source>
    </source>
</evidence>
<evidence type="ECO:0000269" key="3">
    <source>
    </source>
</evidence>
<evidence type="ECO:0000303" key="4">
    <source>
    </source>
</evidence>
<evidence type="ECO:0000305" key="5"/>
<comment type="function">
    <text evidence="1">Acts as a critical regulator of DNA damage response (DDR) signaling via specifically regulating phosphatidylinositol 3-kinase-related protein kinase (PIKK) family proteins.</text>
</comment>
<comment type="subcellular location">
    <subcellularLocation>
        <location evidence="3">Cytoplasm</location>
    </subcellularLocation>
    <subcellularLocation>
        <location evidence="1">Nucleus</location>
    </subcellularLocation>
    <text evidence="1">Localizes mainly in cytosol and to a lesser extent in the nucleus.</text>
</comment>
<comment type="alternative products">
    <event type="alternative splicing"/>
    <isoform>
        <id>Q9EQ15-1</id>
        <name>1</name>
        <sequence type="displayed"/>
    </isoform>
    <isoform>
        <id>Q9EQ15-2</id>
        <name>2</name>
        <sequence type="described" ref="VSP_006769 VSP_006770"/>
    </isoform>
</comment>
<comment type="tissue specificity">
    <text evidence="2">Expressed at low levels in most tissues and highly expressed in adult testis. Widely expressed in adult brain with striking regional distribution in forebrain, midbrain, and hindbrain structures, including the thalamus, hypothalamus, amygdala, hippocampus, pons (PubMed:16684884).</text>
</comment>
<comment type="developmental stage">
    <text evidence="2">Uniformly expressed between 17.5 dpc and 12 weeks.</text>
</comment>
<comment type="disruption phenotype">
    <text evidence="2">Gnb1l deficiency causes lethality during early embryogenesis.</text>
</comment>
<comment type="sequence caution" evidence="5">
    <conflict type="frameshift">
        <sequence resource="EMBL-CDS" id="BAB26980"/>
    </conflict>
</comment>
<protein>
    <recommendedName>
        <fullName>Guanine nucleotide-binding protein subunit beta-like protein 1</fullName>
        <shortName>G protein subunit beta-like protein 1</shortName>
    </recommendedName>
    <alternativeName>
        <fullName>WD repeat-containing protein 14</fullName>
    </alternativeName>
    <alternativeName>
        <fullName>WD40 repeat-containing protein deleted in VCFS</fullName>
        <shortName>WDVCF</shortName>
    </alternativeName>
</protein>
<proteinExistence type="evidence at transcript level"/>
<name>GNB1L_MOUSE</name>
<dbReference type="EMBL" id="AF301595">
    <property type="protein sequence ID" value="AAG44996.1"/>
    <property type="molecule type" value="mRNA"/>
</dbReference>
<dbReference type="EMBL" id="AK010489">
    <property type="protein sequence ID" value="BAB26980.1"/>
    <property type="status" value="ALT_FRAME"/>
    <property type="molecule type" value="mRNA"/>
</dbReference>
<dbReference type="EMBL" id="AK016952">
    <property type="status" value="NOT_ANNOTATED_CDS"/>
    <property type="molecule type" value="mRNA"/>
</dbReference>
<dbReference type="EMBL" id="BC024635">
    <property type="protein sequence ID" value="AAH24635.1"/>
    <property type="molecule type" value="mRNA"/>
</dbReference>
<dbReference type="EMBL" id="BC037676">
    <property type="protein sequence ID" value="AAH37676.1"/>
    <property type="molecule type" value="mRNA"/>
</dbReference>
<dbReference type="CCDS" id="CCDS28022.1">
    <molecule id="Q9EQ15-1"/>
</dbReference>
<dbReference type="RefSeq" id="NP_001075151.1">
    <molecule id="Q9EQ15-1"/>
    <property type="nucleotide sequence ID" value="NM_001081682.2"/>
</dbReference>
<dbReference type="RefSeq" id="NP_075609.2">
    <molecule id="Q9EQ15-1"/>
    <property type="nucleotide sequence ID" value="NM_023120.5"/>
</dbReference>
<dbReference type="RefSeq" id="XP_011244133.1">
    <molecule id="Q9EQ15-1"/>
    <property type="nucleotide sequence ID" value="XM_011245831.1"/>
</dbReference>
<dbReference type="SMR" id="Q9EQ15"/>
<dbReference type="FunCoup" id="Q9EQ15">
    <property type="interactions" value="1785"/>
</dbReference>
<dbReference type="STRING" id="10090.ENSMUSP00000087544"/>
<dbReference type="iPTMnet" id="Q9EQ15"/>
<dbReference type="PhosphoSitePlus" id="Q9EQ15"/>
<dbReference type="PaxDb" id="10090-ENSMUSP00000130371"/>
<dbReference type="ProteomicsDB" id="267640">
    <molecule id="Q9EQ15-1"/>
</dbReference>
<dbReference type="ProteomicsDB" id="267641">
    <molecule id="Q9EQ15-2"/>
</dbReference>
<dbReference type="Pumba" id="Q9EQ15"/>
<dbReference type="Antibodypedia" id="7752">
    <property type="antibodies" value="108 antibodies from 21 providers"/>
</dbReference>
<dbReference type="DNASU" id="13972"/>
<dbReference type="Ensembl" id="ENSMUST00000090086.11">
    <molecule id="Q9EQ15-1"/>
    <property type="protein sequence ID" value="ENSMUSP00000087544.5"/>
    <property type="gene ID" value="ENSMUSG00000000884.18"/>
</dbReference>
<dbReference type="Ensembl" id="ENSMUST00000115600.4">
    <molecule id="Q9EQ15-2"/>
    <property type="protein sequence ID" value="ENSMUSP00000111263.4"/>
    <property type="gene ID" value="ENSMUSG00000000884.18"/>
</dbReference>
<dbReference type="Ensembl" id="ENSMUST00000231621.2">
    <molecule id="Q9EQ15-1"/>
    <property type="protein sequence ID" value="ENSMUSP00000156162.2"/>
    <property type="gene ID" value="ENSMUSG00000000884.18"/>
</dbReference>
<dbReference type="GeneID" id="13972"/>
<dbReference type="KEGG" id="mmu:13972"/>
<dbReference type="UCSC" id="uc007yoa.2">
    <molecule id="Q9EQ15-1"/>
    <property type="organism name" value="mouse"/>
</dbReference>
<dbReference type="AGR" id="MGI:1338057"/>
<dbReference type="CTD" id="54584"/>
<dbReference type="MGI" id="MGI:1338057">
    <property type="gene designation" value="Gnb1l"/>
</dbReference>
<dbReference type="VEuPathDB" id="HostDB:ENSMUSG00000000884"/>
<dbReference type="eggNOG" id="KOG0322">
    <property type="taxonomic scope" value="Eukaryota"/>
</dbReference>
<dbReference type="GeneTree" id="ENSGT00390000018606"/>
<dbReference type="HOGENOM" id="CLU_041940_2_1_1"/>
<dbReference type="InParanoid" id="Q9EQ15"/>
<dbReference type="OMA" id="YQRQSMQ"/>
<dbReference type="OrthoDB" id="7668193at2759"/>
<dbReference type="PhylomeDB" id="Q9EQ15"/>
<dbReference type="TreeFam" id="TF344050"/>
<dbReference type="BioGRID-ORCS" id="13972">
    <property type="hits" value="28 hits in 78 CRISPR screens"/>
</dbReference>
<dbReference type="ChiTaRS" id="Gnb1l">
    <property type="organism name" value="mouse"/>
</dbReference>
<dbReference type="PRO" id="PR:Q9EQ15"/>
<dbReference type="Proteomes" id="UP000000589">
    <property type="component" value="Chromosome 16"/>
</dbReference>
<dbReference type="RNAct" id="Q9EQ15">
    <property type="molecule type" value="protein"/>
</dbReference>
<dbReference type="Bgee" id="ENSMUSG00000000884">
    <property type="expression patterns" value="Expressed in spermatocyte and 180 other cell types or tissues"/>
</dbReference>
<dbReference type="ExpressionAtlas" id="Q9EQ15">
    <property type="expression patterns" value="baseline and differential"/>
</dbReference>
<dbReference type="GO" id="GO:0005737">
    <property type="term" value="C:cytoplasm"/>
    <property type="evidence" value="ECO:0000314"/>
    <property type="project" value="MGI"/>
</dbReference>
<dbReference type="GO" id="GO:0005634">
    <property type="term" value="C:nucleus"/>
    <property type="evidence" value="ECO:0000250"/>
    <property type="project" value="UniProtKB"/>
</dbReference>
<dbReference type="GO" id="GO:0000077">
    <property type="term" value="P:DNA damage checkpoint signaling"/>
    <property type="evidence" value="ECO:0000250"/>
    <property type="project" value="UniProtKB"/>
</dbReference>
<dbReference type="GO" id="GO:0006974">
    <property type="term" value="P:DNA damage response"/>
    <property type="evidence" value="ECO:0000250"/>
    <property type="project" value="UniProtKB"/>
</dbReference>
<dbReference type="GO" id="GO:0035176">
    <property type="term" value="P:social behavior"/>
    <property type="evidence" value="ECO:0000315"/>
    <property type="project" value="MGI"/>
</dbReference>
<dbReference type="FunFam" id="2.130.10.10:FF:002359">
    <property type="entry name" value="Guanine nucleotide-binding protein subunit beta-like protein 1"/>
    <property type="match status" value="1"/>
</dbReference>
<dbReference type="Gene3D" id="2.130.10.10">
    <property type="entry name" value="YVTN repeat-like/Quinoprotein amine dehydrogenase"/>
    <property type="match status" value="2"/>
</dbReference>
<dbReference type="InterPro" id="IPR020472">
    <property type="entry name" value="G-protein_beta_WD-40_rep"/>
</dbReference>
<dbReference type="InterPro" id="IPR015943">
    <property type="entry name" value="WD40/YVTN_repeat-like_dom_sf"/>
</dbReference>
<dbReference type="InterPro" id="IPR036322">
    <property type="entry name" value="WD40_repeat_dom_sf"/>
</dbReference>
<dbReference type="InterPro" id="IPR001680">
    <property type="entry name" value="WD40_rpt"/>
</dbReference>
<dbReference type="PANTHER" id="PTHR19854:SF1">
    <property type="entry name" value="GUANINE NUCLEOTIDE-BINDING PROTEIN SUBUNIT BETA-LIKE PROTEIN 1"/>
    <property type="match status" value="1"/>
</dbReference>
<dbReference type="PANTHER" id="PTHR19854">
    <property type="entry name" value="TRANSDUCIN BETA-LIKE 3"/>
    <property type="match status" value="1"/>
</dbReference>
<dbReference type="Pfam" id="PF00400">
    <property type="entry name" value="WD40"/>
    <property type="match status" value="4"/>
</dbReference>
<dbReference type="PRINTS" id="PR00320">
    <property type="entry name" value="GPROTEINBRPT"/>
</dbReference>
<dbReference type="SMART" id="SM00320">
    <property type="entry name" value="WD40"/>
    <property type="match status" value="6"/>
</dbReference>
<dbReference type="SUPFAM" id="SSF50978">
    <property type="entry name" value="WD40 repeat-like"/>
    <property type="match status" value="1"/>
</dbReference>
<dbReference type="PROSITE" id="PS00678">
    <property type="entry name" value="WD_REPEATS_1"/>
    <property type="match status" value="1"/>
</dbReference>
<dbReference type="PROSITE" id="PS50082">
    <property type="entry name" value="WD_REPEATS_2"/>
    <property type="match status" value="3"/>
</dbReference>
<dbReference type="PROSITE" id="PS50294">
    <property type="entry name" value="WD_REPEATS_REGION"/>
    <property type="match status" value="2"/>
</dbReference>